<accession>P34785</accession>
<proteinExistence type="evidence at transcript level"/>
<sequence length="472" mass="53138">MPREIITLQVGQCGNQIGMEFWKQLCLEHGISKEGMLEDFATQGGDRKDVFFYQADDEHYIPRALLLDLEPRVINGIQNSEYRNLYNHENVFVADHGGGAGNNWASGYHQGEQVEEDIMDMIDREADGSDSLEGFVLCHSIAGGTGSGMGSYLLEALNDRYSKKLVQTYSVFPNQMETSDVVVQPYNSLLTLNKRLTINADCVVVLDNTALNRIAVDRLHIPNPTFAQTNSLVSTVMSASTTTLRYPGYMNNDLVGLVASLIPTPRCHFLMTGYTPLTVERQANAIRKTTVLDVMRRLLQAKNIMVSSYARTKEASQAKYISILNIIQGEVDPTQVHKSLQRIRERKLANFIEWGPASIQVALSRKSPYVQTAHRVSGLMLASHTSIRHLFSKCINQYEKLRKKQAFLDNYRKFPMFADNDLTEFDESREIVQSLVDEYKACESADYIKWGMEDRSKTLSADGTMDLSLPSS</sequence>
<reference key="1">
    <citation type="journal article" date="1993" name="Plant Mol. Biol.">
        <title>Isolation, characterization and sequence of a cDNA encoding gamma-tubulin protein from the fern Anemia phyllitidis L. Sw.</title>
        <authorList>
            <person name="Fuchs U."/>
            <person name="Moepps B."/>
            <person name="Maucher H.P."/>
            <person name="Schraudolf H."/>
        </authorList>
    </citation>
    <scope>NUCLEOTIDE SEQUENCE [MRNA]</scope>
</reference>
<feature type="chain" id="PRO_0000048444" description="Tubulin gamma chain">
    <location>
        <begin position="1"/>
        <end position="472"/>
    </location>
</feature>
<feature type="binding site" evidence="2">
    <location>
        <begin position="142"/>
        <end position="148"/>
    </location>
    <ligand>
        <name>GTP</name>
        <dbReference type="ChEBI" id="CHEBI:37565"/>
    </ligand>
</feature>
<comment type="function">
    <text>Tubulin is the major constituent of microtubules. The gamma chain is found at microtubule organizing centers (MTOC) such as the spindle poles, suggesting that it is involved in the minus-end nucleation of microtubule assembly.</text>
</comment>
<comment type="subcellular location">
    <subcellularLocation>
        <location evidence="1">Cytoplasm</location>
        <location evidence="1">Cytoskeleton</location>
        <location evidence="1">Microtubule organizing center</location>
    </subcellularLocation>
</comment>
<comment type="similarity">
    <text evidence="3">Belongs to the tubulin family.</text>
</comment>
<keyword id="KW-0963">Cytoplasm</keyword>
<keyword id="KW-0206">Cytoskeleton</keyword>
<keyword id="KW-0342">GTP-binding</keyword>
<keyword id="KW-0493">Microtubule</keyword>
<keyword id="KW-0547">Nucleotide-binding</keyword>
<protein>
    <recommendedName>
        <fullName>Tubulin gamma chain</fullName>
    </recommendedName>
    <alternativeName>
        <fullName>Gamma-tubulin</fullName>
    </alternativeName>
</protein>
<dbReference type="EMBL" id="X69188">
    <property type="protein sequence ID" value="CAA48932.1"/>
    <property type="molecule type" value="mRNA"/>
</dbReference>
<dbReference type="PIR" id="S39553">
    <property type="entry name" value="S39553"/>
</dbReference>
<dbReference type="SMR" id="P34785"/>
<dbReference type="GO" id="GO:0005737">
    <property type="term" value="C:cytoplasm"/>
    <property type="evidence" value="ECO:0007669"/>
    <property type="project" value="UniProtKB-KW"/>
</dbReference>
<dbReference type="GO" id="GO:0000930">
    <property type="term" value="C:gamma-tubulin complex"/>
    <property type="evidence" value="ECO:0007669"/>
    <property type="project" value="InterPro"/>
</dbReference>
<dbReference type="GO" id="GO:0005874">
    <property type="term" value="C:microtubule"/>
    <property type="evidence" value="ECO:0007669"/>
    <property type="project" value="UniProtKB-KW"/>
</dbReference>
<dbReference type="GO" id="GO:0005525">
    <property type="term" value="F:GTP binding"/>
    <property type="evidence" value="ECO:0007669"/>
    <property type="project" value="UniProtKB-KW"/>
</dbReference>
<dbReference type="GO" id="GO:0031122">
    <property type="term" value="P:cytoplasmic microtubule organization"/>
    <property type="evidence" value="ECO:0007669"/>
    <property type="project" value="InterPro"/>
</dbReference>
<dbReference type="GO" id="GO:0007020">
    <property type="term" value="P:microtubule nucleation"/>
    <property type="evidence" value="ECO:0007669"/>
    <property type="project" value="InterPro"/>
</dbReference>
<dbReference type="CDD" id="cd02188">
    <property type="entry name" value="gamma_tubulin"/>
    <property type="match status" value="1"/>
</dbReference>
<dbReference type="FunFam" id="1.10.287.600:FF:000004">
    <property type="entry name" value="Tubulin gamma chain"/>
    <property type="match status" value="1"/>
</dbReference>
<dbReference type="FunFam" id="3.30.1330.20:FF:000003">
    <property type="entry name" value="Tubulin gamma chain"/>
    <property type="match status" value="1"/>
</dbReference>
<dbReference type="FunFam" id="3.40.50.1440:FF:000010">
    <property type="entry name" value="Tubulin gamma chain"/>
    <property type="match status" value="1"/>
</dbReference>
<dbReference type="Gene3D" id="1.10.287.600">
    <property type="entry name" value="Helix hairpin bin"/>
    <property type="match status" value="1"/>
</dbReference>
<dbReference type="Gene3D" id="3.30.1330.20">
    <property type="entry name" value="Tubulin/FtsZ, C-terminal domain"/>
    <property type="match status" value="1"/>
</dbReference>
<dbReference type="Gene3D" id="3.40.50.1440">
    <property type="entry name" value="Tubulin/FtsZ, GTPase domain"/>
    <property type="match status" value="1"/>
</dbReference>
<dbReference type="InterPro" id="IPR002454">
    <property type="entry name" value="Gamma_tubulin"/>
</dbReference>
<dbReference type="InterPro" id="IPR008280">
    <property type="entry name" value="Tub_FtsZ_C"/>
</dbReference>
<dbReference type="InterPro" id="IPR000217">
    <property type="entry name" value="Tubulin"/>
</dbReference>
<dbReference type="InterPro" id="IPR037103">
    <property type="entry name" value="Tubulin/FtsZ-like_C"/>
</dbReference>
<dbReference type="InterPro" id="IPR018316">
    <property type="entry name" value="Tubulin/FtsZ_2-layer-sand-dom"/>
</dbReference>
<dbReference type="InterPro" id="IPR036525">
    <property type="entry name" value="Tubulin/FtsZ_GTPase_sf"/>
</dbReference>
<dbReference type="InterPro" id="IPR023123">
    <property type="entry name" value="Tubulin_C"/>
</dbReference>
<dbReference type="InterPro" id="IPR017975">
    <property type="entry name" value="Tubulin_CS"/>
</dbReference>
<dbReference type="InterPro" id="IPR003008">
    <property type="entry name" value="Tubulin_FtsZ_GTPase"/>
</dbReference>
<dbReference type="PANTHER" id="PTHR11588">
    <property type="entry name" value="TUBULIN"/>
    <property type="match status" value="1"/>
</dbReference>
<dbReference type="Pfam" id="PF00091">
    <property type="entry name" value="Tubulin"/>
    <property type="match status" value="1"/>
</dbReference>
<dbReference type="Pfam" id="PF03953">
    <property type="entry name" value="Tubulin_C"/>
    <property type="match status" value="1"/>
</dbReference>
<dbReference type="PRINTS" id="PR01164">
    <property type="entry name" value="GAMMATUBULIN"/>
</dbReference>
<dbReference type="PRINTS" id="PR01161">
    <property type="entry name" value="TUBULIN"/>
</dbReference>
<dbReference type="SMART" id="SM00864">
    <property type="entry name" value="Tubulin"/>
    <property type="match status" value="1"/>
</dbReference>
<dbReference type="SMART" id="SM00865">
    <property type="entry name" value="Tubulin_C"/>
    <property type="match status" value="1"/>
</dbReference>
<dbReference type="SUPFAM" id="SSF55307">
    <property type="entry name" value="Tubulin C-terminal domain-like"/>
    <property type="match status" value="1"/>
</dbReference>
<dbReference type="SUPFAM" id="SSF52490">
    <property type="entry name" value="Tubulin nucleotide-binding domain-like"/>
    <property type="match status" value="1"/>
</dbReference>
<dbReference type="PROSITE" id="PS00227">
    <property type="entry name" value="TUBULIN"/>
    <property type="match status" value="1"/>
</dbReference>
<organism>
    <name type="scientific">Anemia phyllitidis</name>
    <name type="common">Fern</name>
    <name type="synonym">Osmunda phyllitidis</name>
    <dbReference type="NCBI Taxonomy" id="12940"/>
    <lineage>
        <taxon>Eukaryota</taxon>
        <taxon>Viridiplantae</taxon>
        <taxon>Streptophyta</taxon>
        <taxon>Embryophyta</taxon>
        <taxon>Tracheophyta</taxon>
        <taxon>Polypodiopsida</taxon>
        <taxon>Polypodiidae</taxon>
        <taxon>Schizaeales</taxon>
        <taxon>Anemiaceae</taxon>
        <taxon>Anemia</taxon>
    </lineage>
</organism>
<name>TBG_ANEPH</name>
<gene>
    <name type="primary">TUBG</name>
</gene>
<evidence type="ECO:0000250" key="1">
    <source>
        <dbReference type="UniProtKB" id="P38557"/>
    </source>
</evidence>
<evidence type="ECO:0000255" key="2"/>
<evidence type="ECO:0000305" key="3"/>